<sequence length="153" mass="16237">MVATLFIDADACPVKDEAYKVAARHGYKTFVVSNSWIRVPATPVIEQIVVDAGPDVADDWIAERCGPGDVVVTNDIPLADRVLKAGGAAVAPNGRVFSHDMIGSALASRSIGEHLRSMGEVTKGPAAFANADRSRFLQALDQLVVKAKRAAPR</sequence>
<accession>Q9A8Y2</accession>
<dbReference type="EMBL" id="AE005673">
    <property type="protein sequence ID" value="AAK23197.1"/>
    <property type="molecule type" value="Genomic_DNA"/>
</dbReference>
<dbReference type="PIR" id="A87400">
    <property type="entry name" value="A87400"/>
</dbReference>
<dbReference type="RefSeq" id="NP_420029.1">
    <property type="nucleotide sequence ID" value="NC_002696.2"/>
</dbReference>
<dbReference type="RefSeq" id="WP_010919097.1">
    <property type="nucleotide sequence ID" value="NC_002696.2"/>
</dbReference>
<dbReference type="STRING" id="190650.CC_1215"/>
<dbReference type="EnsemblBacteria" id="AAK23197">
    <property type="protein sequence ID" value="AAK23197"/>
    <property type="gene ID" value="CC_1215"/>
</dbReference>
<dbReference type="KEGG" id="ccr:CC_1215"/>
<dbReference type="PATRIC" id="fig|190650.5.peg.1239"/>
<dbReference type="eggNOG" id="COG1671">
    <property type="taxonomic scope" value="Bacteria"/>
</dbReference>
<dbReference type="HOGENOM" id="CLU_106619_2_1_5"/>
<dbReference type="BioCyc" id="CAULO:CC1215-MONOMER"/>
<dbReference type="Proteomes" id="UP000001816">
    <property type="component" value="Chromosome"/>
</dbReference>
<dbReference type="CDD" id="cd18720">
    <property type="entry name" value="PIN_YqxD-like"/>
    <property type="match status" value="1"/>
</dbReference>
<dbReference type="HAMAP" id="MF_00489">
    <property type="entry name" value="UPF0178"/>
    <property type="match status" value="1"/>
</dbReference>
<dbReference type="InterPro" id="IPR003791">
    <property type="entry name" value="UPF0178"/>
</dbReference>
<dbReference type="NCBIfam" id="NF001095">
    <property type="entry name" value="PRK00124.1"/>
    <property type="match status" value="1"/>
</dbReference>
<dbReference type="PANTHER" id="PTHR35146">
    <property type="entry name" value="UPF0178 PROTEIN YAII"/>
    <property type="match status" value="1"/>
</dbReference>
<dbReference type="PANTHER" id="PTHR35146:SF1">
    <property type="entry name" value="UPF0178 PROTEIN YAII"/>
    <property type="match status" value="1"/>
</dbReference>
<dbReference type="Pfam" id="PF02639">
    <property type="entry name" value="DUF188"/>
    <property type="match status" value="1"/>
</dbReference>
<comment type="similarity">
    <text evidence="1">Belongs to the UPF0178 family.</text>
</comment>
<keyword id="KW-1185">Reference proteome</keyword>
<evidence type="ECO:0000305" key="1"/>
<gene>
    <name type="ordered locus">CC_1215</name>
</gene>
<protein>
    <recommendedName>
        <fullName>UPF0178 protein CC_1215</fullName>
    </recommendedName>
</protein>
<feature type="chain" id="PRO_0000175971" description="UPF0178 protein CC_1215">
    <location>
        <begin position="1"/>
        <end position="153"/>
    </location>
</feature>
<reference key="1">
    <citation type="journal article" date="2001" name="Proc. Natl. Acad. Sci. U.S.A.">
        <title>Complete genome sequence of Caulobacter crescentus.</title>
        <authorList>
            <person name="Nierman W.C."/>
            <person name="Feldblyum T.V."/>
            <person name="Laub M.T."/>
            <person name="Paulsen I.T."/>
            <person name="Nelson K.E."/>
            <person name="Eisen J.A."/>
            <person name="Heidelberg J.F."/>
            <person name="Alley M.R.K."/>
            <person name="Ohta N."/>
            <person name="Maddock J.R."/>
            <person name="Potocka I."/>
            <person name="Nelson W.C."/>
            <person name="Newton A."/>
            <person name="Stephens C."/>
            <person name="Phadke N.D."/>
            <person name="Ely B."/>
            <person name="DeBoy R.T."/>
            <person name="Dodson R.J."/>
            <person name="Durkin A.S."/>
            <person name="Gwinn M.L."/>
            <person name="Haft D.H."/>
            <person name="Kolonay J.F."/>
            <person name="Smit J."/>
            <person name="Craven M.B."/>
            <person name="Khouri H.M."/>
            <person name="Shetty J."/>
            <person name="Berry K.J."/>
            <person name="Utterback T.R."/>
            <person name="Tran K."/>
            <person name="Wolf A.M."/>
            <person name="Vamathevan J.J."/>
            <person name="Ermolaeva M.D."/>
            <person name="White O."/>
            <person name="Salzberg S.L."/>
            <person name="Venter J.C."/>
            <person name="Shapiro L."/>
            <person name="Fraser C.M."/>
        </authorList>
    </citation>
    <scope>NUCLEOTIDE SEQUENCE [LARGE SCALE GENOMIC DNA]</scope>
    <source>
        <strain>ATCC 19089 / CIP 103742 / CB 15</strain>
    </source>
</reference>
<organism>
    <name type="scientific">Caulobacter vibrioides (strain ATCC 19089 / CIP 103742 / CB 15)</name>
    <name type="common">Caulobacter crescentus</name>
    <dbReference type="NCBI Taxonomy" id="190650"/>
    <lineage>
        <taxon>Bacteria</taxon>
        <taxon>Pseudomonadati</taxon>
        <taxon>Pseudomonadota</taxon>
        <taxon>Alphaproteobacteria</taxon>
        <taxon>Caulobacterales</taxon>
        <taxon>Caulobacteraceae</taxon>
        <taxon>Caulobacter</taxon>
    </lineage>
</organism>
<proteinExistence type="inferred from homology"/>
<name>Y1215_CAUVC</name>